<evidence type="ECO:0000255" key="1">
    <source>
        <dbReference type="HAMAP-Rule" id="MF_01865"/>
    </source>
</evidence>
<evidence type="ECO:0000255" key="2">
    <source>
        <dbReference type="PROSITE-ProRule" id="PRU01266"/>
    </source>
</evidence>
<name>RIMO_SHEB9</name>
<dbReference type="EC" id="2.8.4.4" evidence="1"/>
<dbReference type="EMBL" id="CP000891">
    <property type="protein sequence ID" value="ABX47716.1"/>
    <property type="molecule type" value="Genomic_DNA"/>
</dbReference>
<dbReference type="RefSeq" id="WP_006087023.1">
    <property type="nucleotide sequence ID" value="NC_009997.1"/>
</dbReference>
<dbReference type="SMR" id="A9KZF7"/>
<dbReference type="GeneID" id="11770866"/>
<dbReference type="KEGG" id="sbn:Sbal195_0538"/>
<dbReference type="HOGENOM" id="CLU_018697_0_0_6"/>
<dbReference type="Proteomes" id="UP000000770">
    <property type="component" value="Chromosome"/>
</dbReference>
<dbReference type="GO" id="GO:0005829">
    <property type="term" value="C:cytosol"/>
    <property type="evidence" value="ECO:0007669"/>
    <property type="project" value="TreeGrafter"/>
</dbReference>
<dbReference type="GO" id="GO:0051539">
    <property type="term" value="F:4 iron, 4 sulfur cluster binding"/>
    <property type="evidence" value="ECO:0007669"/>
    <property type="project" value="UniProtKB-UniRule"/>
</dbReference>
<dbReference type="GO" id="GO:0035599">
    <property type="term" value="F:aspartic acid methylthiotransferase activity"/>
    <property type="evidence" value="ECO:0007669"/>
    <property type="project" value="TreeGrafter"/>
</dbReference>
<dbReference type="GO" id="GO:0046872">
    <property type="term" value="F:metal ion binding"/>
    <property type="evidence" value="ECO:0007669"/>
    <property type="project" value="UniProtKB-KW"/>
</dbReference>
<dbReference type="GO" id="GO:0103039">
    <property type="term" value="F:protein methylthiotransferase activity"/>
    <property type="evidence" value="ECO:0007669"/>
    <property type="project" value="UniProtKB-EC"/>
</dbReference>
<dbReference type="GO" id="GO:0006400">
    <property type="term" value="P:tRNA modification"/>
    <property type="evidence" value="ECO:0007669"/>
    <property type="project" value="InterPro"/>
</dbReference>
<dbReference type="CDD" id="cd01335">
    <property type="entry name" value="Radical_SAM"/>
    <property type="match status" value="1"/>
</dbReference>
<dbReference type="FunFam" id="2.40.50.140:FF:000060">
    <property type="entry name" value="Ribosomal protein S12 methylthiotransferase RimO"/>
    <property type="match status" value="1"/>
</dbReference>
<dbReference type="FunFam" id="3.40.50.12160:FF:000002">
    <property type="entry name" value="Ribosomal protein S12 methylthiotransferase RimO"/>
    <property type="match status" value="1"/>
</dbReference>
<dbReference type="FunFam" id="3.80.30.20:FF:000001">
    <property type="entry name" value="tRNA-2-methylthio-N(6)-dimethylallyladenosine synthase 2"/>
    <property type="match status" value="1"/>
</dbReference>
<dbReference type="Gene3D" id="3.40.50.12160">
    <property type="entry name" value="Methylthiotransferase, N-terminal domain"/>
    <property type="match status" value="1"/>
</dbReference>
<dbReference type="Gene3D" id="2.40.50.140">
    <property type="entry name" value="Nucleic acid-binding proteins"/>
    <property type="match status" value="1"/>
</dbReference>
<dbReference type="Gene3D" id="3.80.30.20">
    <property type="entry name" value="tm_1862 like domain"/>
    <property type="match status" value="1"/>
</dbReference>
<dbReference type="HAMAP" id="MF_01865">
    <property type="entry name" value="MTTase_RimO"/>
    <property type="match status" value="1"/>
</dbReference>
<dbReference type="InterPro" id="IPR006638">
    <property type="entry name" value="Elp3/MiaA/NifB-like_rSAM"/>
</dbReference>
<dbReference type="InterPro" id="IPR005839">
    <property type="entry name" value="Methylthiotransferase"/>
</dbReference>
<dbReference type="InterPro" id="IPR020612">
    <property type="entry name" value="Methylthiotransferase_CS"/>
</dbReference>
<dbReference type="InterPro" id="IPR013848">
    <property type="entry name" value="Methylthiotransferase_N"/>
</dbReference>
<dbReference type="InterPro" id="IPR038135">
    <property type="entry name" value="Methylthiotransferase_N_sf"/>
</dbReference>
<dbReference type="InterPro" id="IPR012340">
    <property type="entry name" value="NA-bd_OB-fold"/>
</dbReference>
<dbReference type="InterPro" id="IPR005840">
    <property type="entry name" value="Ribosomal_uS12_MeSTrfase_RimO"/>
</dbReference>
<dbReference type="InterPro" id="IPR007197">
    <property type="entry name" value="rSAM"/>
</dbReference>
<dbReference type="InterPro" id="IPR023404">
    <property type="entry name" value="rSAM_horseshoe"/>
</dbReference>
<dbReference type="InterPro" id="IPR002792">
    <property type="entry name" value="TRAM_dom"/>
</dbReference>
<dbReference type="NCBIfam" id="TIGR01125">
    <property type="entry name" value="30S ribosomal protein S12 methylthiotransferase RimO"/>
    <property type="match status" value="1"/>
</dbReference>
<dbReference type="NCBIfam" id="TIGR00089">
    <property type="entry name" value="MiaB/RimO family radical SAM methylthiotransferase"/>
    <property type="match status" value="1"/>
</dbReference>
<dbReference type="PANTHER" id="PTHR43837">
    <property type="entry name" value="RIBOSOMAL PROTEIN S12 METHYLTHIOTRANSFERASE RIMO"/>
    <property type="match status" value="1"/>
</dbReference>
<dbReference type="PANTHER" id="PTHR43837:SF1">
    <property type="entry name" value="RIBOSOMAL PROTEIN US12 METHYLTHIOTRANSFERASE RIMO"/>
    <property type="match status" value="1"/>
</dbReference>
<dbReference type="Pfam" id="PF04055">
    <property type="entry name" value="Radical_SAM"/>
    <property type="match status" value="1"/>
</dbReference>
<dbReference type="Pfam" id="PF18693">
    <property type="entry name" value="TRAM_2"/>
    <property type="match status" value="1"/>
</dbReference>
<dbReference type="Pfam" id="PF00919">
    <property type="entry name" value="UPF0004"/>
    <property type="match status" value="1"/>
</dbReference>
<dbReference type="SFLD" id="SFLDG01082">
    <property type="entry name" value="B12-binding_domain_containing"/>
    <property type="match status" value="1"/>
</dbReference>
<dbReference type="SFLD" id="SFLDG01061">
    <property type="entry name" value="methylthiotransferase"/>
    <property type="match status" value="1"/>
</dbReference>
<dbReference type="SFLD" id="SFLDF00274">
    <property type="entry name" value="ribosomal_protein_S12_methylth"/>
    <property type="match status" value="1"/>
</dbReference>
<dbReference type="SMART" id="SM00729">
    <property type="entry name" value="Elp3"/>
    <property type="match status" value="1"/>
</dbReference>
<dbReference type="SUPFAM" id="SSF102114">
    <property type="entry name" value="Radical SAM enzymes"/>
    <property type="match status" value="1"/>
</dbReference>
<dbReference type="PROSITE" id="PS51449">
    <property type="entry name" value="MTTASE_N"/>
    <property type="match status" value="1"/>
</dbReference>
<dbReference type="PROSITE" id="PS01278">
    <property type="entry name" value="MTTASE_RADICAL"/>
    <property type="match status" value="1"/>
</dbReference>
<dbReference type="PROSITE" id="PS51918">
    <property type="entry name" value="RADICAL_SAM"/>
    <property type="match status" value="1"/>
</dbReference>
<dbReference type="PROSITE" id="PS50926">
    <property type="entry name" value="TRAM"/>
    <property type="match status" value="1"/>
</dbReference>
<keyword id="KW-0004">4Fe-4S</keyword>
<keyword id="KW-0963">Cytoplasm</keyword>
<keyword id="KW-0408">Iron</keyword>
<keyword id="KW-0411">Iron-sulfur</keyword>
<keyword id="KW-0479">Metal-binding</keyword>
<keyword id="KW-0949">S-adenosyl-L-methionine</keyword>
<keyword id="KW-0808">Transferase</keyword>
<protein>
    <recommendedName>
        <fullName evidence="1">Ribosomal protein uS12 methylthiotransferase RimO</fullName>
        <shortName evidence="1">uS12 MTTase</shortName>
        <shortName evidence="1">uS12 methylthiotransferase</shortName>
        <ecNumber evidence="1">2.8.4.4</ecNumber>
    </recommendedName>
    <alternativeName>
        <fullName evidence="1">Ribosomal protein uS12 (aspartate-C(3))-methylthiotransferase</fullName>
    </alternativeName>
    <alternativeName>
        <fullName evidence="1">Ribosome maturation factor RimO</fullName>
    </alternativeName>
</protein>
<accession>A9KZF7</accession>
<comment type="function">
    <text evidence="1">Catalyzes the methylthiolation of an aspartic acid residue of ribosomal protein uS12.</text>
</comment>
<comment type="catalytic activity">
    <reaction evidence="1">
        <text>L-aspartate(89)-[ribosomal protein uS12]-hydrogen + (sulfur carrier)-SH + AH2 + 2 S-adenosyl-L-methionine = 3-methylsulfanyl-L-aspartate(89)-[ribosomal protein uS12]-hydrogen + (sulfur carrier)-H + 5'-deoxyadenosine + L-methionine + A + S-adenosyl-L-homocysteine + 2 H(+)</text>
        <dbReference type="Rhea" id="RHEA:37087"/>
        <dbReference type="Rhea" id="RHEA-COMP:10460"/>
        <dbReference type="Rhea" id="RHEA-COMP:10461"/>
        <dbReference type="Rhea" id="RHEA-COMP:14737"/>
        <dbReference type="Rhea" id="RHEA-COMP:14739"/>
        <dbReference type="ChEBI" id="CHEBI:13193"/>
        <dbReference type="ChEBI" id="CHEBI:15378"/>
        <dbReference type="ChEBI" id="CHEBI:17319"/>
        <dbReference type="ChEBI" id="CHEBI:17499"/>
        <dbReference type="ChEBI" id="CHEBI:29917"/>
        <dbReference type="ChEBI" id="CHEBI:29961"/>
        <dbReference type="ChEBI" id="CHEBI:57844"/>
        <dbReference type="ChEBI" id="CHEBI:57856"/>
        <dbReference type="ChEBI" id="CHEBI:59789"/>
        <dbReference type="ChEBI" id="CHEBI:64428"/>
        <dbReference type="ChEBI" id="CHEBI:73599"/>
        <dbReference type="EC" id="2.8.4.4"/>
    </reaction>
</comment>
<comment type="cofactor">
    <cofactor evidence="1">
        <name>[4Fe-4S] cluster</name>
        <dbReference type="ChEBI" id="CHEBI:49883"/>
    </cofactor>
    <text evidence="1">Binds 2 [4Fe-4S] clusters. One cluster is coordinated with 3 cysteines and an exchangeable S-adenosyl-L-methionine.</text>
</comment>
<comment type="subcellular location">
    <subcellularLocation>
        <location evidence="1">Cytoplasm</location>
    </subcellularLocation>
</comment>
<comment type="similarity">
    <text evidence="1">Belongs to the methylthiotransferase family. RimO subfamily.</text>
</comment>
<proteinExistence type="inferred from homology"/>
<organism>
    <name type="scientific">Shewanella baltica (strain OS195)</name>
    <dbReference type="NCBI Taxonomy" id="399599"/>
    <lineage>
        <taxon>Bacteria</taxon>
        <taxon>Pseudomonadati</taxon>
        <taxon>Pseudomonadota</taxon>
        <taxon>Gammaproteobacteria</taxon>
        <taxon>Alteromonadales</taxon>
        <taxon>Shewanellaceae</taxon>
        <taxon>Shewanella</taxon>
    </lineage>
</organism>
<feature type="chain" id="PRO_0000375002" description="Ribosomal protein uS12 methylthiotransferase RimO">
    <location>
        <begin position="1"/>
        <end position="472"/>
    </location>
</feature>
<feature type="domain" description="MTTase N-terminal" evidence="1">
    <location>
        <begin position="33"/>
        <end position="143"/>
    </location>
</feature>
<feature type="domain" description="Radical SAM core" evidence="2">
    <location>
        <begin position="161"/>
        <end position="398"/>
    </location>
</feature>
<feature type="domain" description="TRAM" evidence="1">
    <location>
        <begin position="401"/>
        <end position="467"/>
    </location>
</feature>
<feature type="binding site" evidence="1">
    <location>
        <position position="42"/>
    </location>
    <ligand>
        <name>[4Fe-4S] cluster</name>
        <dbReference type="ChEBI" id="CHEBI:49883"/>
        <label>1</label>
    </ligand>
</feature>
<feature type="binding site" evidence="1">
    <location>
        <position position="78"/>
    </location>
    <ligand>
        <name>[4Fe-4S] cluster</name>
        <dbReference type="ChEBI" id="CHEBI:49883"/>
        <label>1</label>
    </ligand>
</feature>
<feature type="binding site" evidence="1">
    <location>
        <position position="107"/>
    </location>
    <ligand>
        <name>[4Fe-4S] cluster</name>
        <dbReference type="ChEBI" id="CHEBI:49883"/>
        <label>1</label>
    </ligand>
</feature>
<feature type="binding site" evidence="1">
    <location>
        <position position="175"/>
    </location>
    <ligand>
        <name>[4Fe-4S] cluster</name>
        <dbReference type="ChEBI" id="CHEBI:49883"/>
        <label>2</label>
        <note>4Fe-4S-S-AdoMet</note>
    </ligand>
</feature>
<feature type="binding site" evidence="1">
    <location>
        <position position="179"/>
    </location>
    <ligand>
        <name>[4Fe-4S] cluster</name>
        <dbReference type="ChEBI" id="CHEBI:49883"/>
        <label>2</label>
        <note>4Fe-4S-S-AdoMet</note>
    </ligand>
</feature>
<feature type="binding site" evidence="1">
    <location>
        <position position="182"/>
    </location>
    <ligand>
        <name>[4Fe-4S] cluster</name>
        <dbReference type="ChEBI" id="CHEBI:49883"/>
        <label>2</label>
        <note>4Fe-4S-S-AdoMet</note>
    </ligand>
</feature>
<reference key="1">
    <citation type="submission" date="2007-11" db="EMBL/GenBank/DDBJ databases">
        <title>Complete sequence of chromosome of Shewanella baltica OS195.</title>
        <authorList>
            <consortium name="US DOE Joint Genome Institute"/>
            <person name="Copeland A."/>
            <person name="Lucas S."/>
            <person name="Lapidus A."/>
            <person name="Barry K."/>
            <person name="Glavina del Rio T."/>
            <person name="Dalin E."/>
            <person name="Tice H."/>
            <person name="Pitluck S."/>
            <person name="Chain P."/>
            <person name="Malfatti S."/>
            <person name="Shin M."/>
            <person name="Vergez L."/>
            <person name="Schmutz J."/>
            <person name="Larimer F."/>
            <person name="Land M."/>
            <person name="Hauser L."/>
            <person name="Kyrpides N."/>
            <person name="Kim E."/>
            <person name="Brettar I."/>
            <person name="Rodrigues J."/>
            <person name="Konstantinidis K."/>
            <person name="Klappenbach J."/>
            <person name="Hofle M."/>
            <person name="Tiedje J."/>
            <person name="Richardson P."/>
        </authorList>
    </citation>
    <scope>NUCLEOTIDE SEQUENCE [LARGE SCALE GENOMIC DNA]</scope>
    <source>
        <strain>OS195</strain>
    </source>
</reference>
<sequence>MTVETFKPKQTTTLDIPVKTLEAASTNAVTTGNRIGFVSLGCPKNLVDSERILTQLRIDGYEVTNSYDNADLVIVNTCGFIDAAVEESLDAVREALEENGKVIVTGCLGAKENQIREVHPDVLEITGPHSYEAVLKHVHKYVPKPEHNPFTSLIPQTGVKLTPKHYAYLKISEGCDNRCTFCIIPSLRGDLDSRPAGSILDEAKRLVESGVQEILVVSQDTSAYGKDKGGRTDFWNGMPVKQDITSLARQLGKMGAWVRLHYIYPYPWVDDLIPLMAEGLILPYLDIPMQHASPRILKMMKRPGRVDRQLEAIQRWREICPDLVIRSTFIVGFPGETEEDFQILLDFLKEARLDRVGCFKYSEVDGAVANTIAELISEEVKEDRYHRFMEVQAEISAERLARFVGRTLDILIDDVDEEGAIGRSFADAPEIDGMVFINGETELEPGMLVRARITHSDEHDLWAEVVDADTQD</sequence>
<gene>
    <name evidence="1" type="primary">rimO</name>
    <name type="ordered locus">Sbal195_0538</name>
</gene>